<evidence type="ECO:0000250" key="1">
    <source>
        <dbReference type="UniProtKB" id="P33151"/>
    </source>
</evidence>
<evidence type="ECO:0000250" key="2">
    <source>
        <dbReference type="UniProtKB" id="P55284"/>
    </source>
</evidence>
<evidence type="ECO:0000250" key="3">
    <source>
        <dbReference type="UniProtKB" id="Q68SP4"/>
    </source>
</evidence>
<evidence type="ECO:0000255" key="4"/>
<evidence type="ECO:0000255" key="5">
    <source>
        <dbReference type="PROSITE-ProRule" id="PRU00043"/>
    </source>
</evidence>
<evidence type="ECO:0000269" key="6">
    <source>
    </source>
</evidence>
<evidence type="ECO:0000303" key="7">
    <source>
    </source>
</evidence>
<evidence type="ECO:0000305" key="8"/>
<evidence type="ECO:0000312" key="9">
    <source>
        <dbReference type="EMBL" id="AAN33002.1"/>
    </source>
</evidence>
<evidence type="ECO:0000312" key="10">
    <source>
        <dbReference type="PDB" id="3PPE"/>
    </source>
</evidence>
<evidence type="ECO:0007829" key="11">
    <source>
        <dbReference type="PDB" id="3PPE"/>
    </source>
</evidence>
<keyword id="KW-0002">3D-structure</keyword>
<keyword id="KW-0106">Calcium</keyword>
<keyword id="KW-0130">Cell adhesion</keyword>
<keyword id="KW-0965">Cell junction</keyword>
<keyword id="KW-1003">Cell membrane</keyword>
<keyword id="KW-0165">Cleavage on pair of basic residues</keyword>
<keyword id="KW-0963">Cytoplasm</keyword>
<keyword id="KW-0325">Glycoprotein</keyword>
<keyword id="KW-0472">Membrane</keyword>
<keyword id="KW-0479">Metal-binding</keyword>
<keyword id="KW-1185">Reference proteome</keyword>
<keyword id="KW-0677">Repeat</keyword>
<keyword id="KW-0732">Signal</keyword>
<keyword id="KW-0812">Transmembrane</keyword>
<keyword id="KW-1133">Transmembrane helix</keyword>
<comment type="function">
    <text evidence="2 6">Cadherins are calcium-dependent cell adhesion proteins. They preferentially interact with themselves in a homophilic manner in connecting cells; cadherins may thus contribute to the sorting of heterogeneous cell types. This cadherin may play a important role in endothelial cell biology through control of the cohesion and organization of the intercellular junctions. Plays a role in coupling actin fibers to cell junctions in endothelial cells (By similarity). Associates with CTNND1/p120-catenin to control CADH5 endocytosis (By similarity).</text>
</comment>
<comment type="subcellular location">
    <subcellularLocation>
        <location evidence="3">Cell junction</location>
        <location evidence="3">Adherens junction</location>
    </subcellularLocation>
    <subcellularLocation>
        <location evidence="1">Cell membrane</location>
        <topology evidence="1">Single-pass type I membrane protein</topology>
    </subcellularLocation>
    <subcellularLocation>
        <location evidence="2">Cytoplasm</location>
    </subcellularLocation>
</comment>
<comment type="domain">
    <text evidence="6">Three calcium ions are usually bound at the interface of each cadherin domain and rigidify the connections, imparting a strong curvature to the full-length ectodomain.</text>
</comment>
<comment type="PTM">
    <text evidence="6">N-glycosylated.</text>
</comment>
<comment type="PTM">
    <text evidence="6">O-glycosylated.</text>
</comment>
<feature type="signal peptide" evidence="4">
    <location>
        <begin position="1"/>
        <end position="18"/>
    </location>
</feature>
<feature type="propeptide" id="PRO_0000425446" evidence="1 4">
    <location>
        <begin position="19"/>
        <end position="40"/>
    </location>
</feature>
<feature type="chain" id="PRO_0000425447" description="Cadherin-5" evidence="1">
    <location>
        <begin position="41"/>
        <end position="773"/>
    </location>
</feature>
<feature type="topological domain" description="Extracellular" evidence="4">
    <location>
        <begin position="41"/>
        <end position="595"/>
    </location>
</feature>
<feature type="transmembrane region" description="Helical" evidence="4">
    <location>
        <begin position="596"/>
        <end position="617"/>
    </location>
</feature>
<feature type="topological domain" description="Cytoplasmic" evidence="4">
    <location>
        <begin position="618"/>
        <end position="773"/>
    </location>
</feature>
<feature type="domain" description="Cadherin 1" evidence="5">
    <location>
        <begin position="39"/>
        <end position="144"/>
    </location>
</feature>
<feature type="domain" description="Cadherin 2" evidence="5">
    <location>
        <begin position="145"/>
        <end position="251"/>
    </location>
</feature>
<feature type="domain" description="Cadherin 3" evidence="5">
    <location>
        <begin position="252"/>
        <end position="366"/>
    </location>
</feature>
<feature type="domain" description="Cadherin 4" evidence="5">
    <location>
        <begin position="367"/>
        <end position="474"/>
    </location>
</feature>
<feature type="domain" description="Cadherin 5" evidence="5">
    <location>
        <begin position="474"/>
        <end position="582"/>
    </location>
</feature>
<feature type="binding site" evidence="6">
    <location>
        <position position="51"/>
    </location>
    <ligand>
        <name>Ca(2+)</name>
        <dbReference type="ChEBI" id="CHEBI:29108"/>
        <label>1</label>
    </ligand>
</feature>
<feature type="binding site" evidence="6">
    <location>
        <position position="51"/>
    </location>
    <ligand>
        <name>Ca(2+)</name>
        <dbReference type="ChEBI" id="CHEBI:29108"/>
        <label>2</label>
    </ligand>
</feature>
<feature type="binding site" evidence="6">
    <location>
        <position position="52"/>
    </location>
    <ligand>
        <name>Ca(2+)</name>
        <dbReference type="ChEBI" id="CHEBI:29108"/>
        <label>1</label>
    </ligand>
</feature>
<feature type="binding site" evidence="6">
    <location>
        <position position="102"/>
    </location>
    <ligand>
        <name>Ca(2+)</name>
        <dbReference type="ChEBI" id="CHEBI:29108"/>
        <label>1</label>
    </ligand>
</feature>
<feature type="binding site" evidence="6">
    <location>
        <position position="104"/>
    </location>
    <ligand>
        <name>Ca(2+)</name>
        <dbReference type="ChEBI" id="CHEBI:29108"/>
        <label>1</label>
    </ligand>
</feature>
<feature type="binding site" evidence="6">
    <location>
        <position position="104"/>
    </location>
    <ligand>
        <name>Ca(2+)</name>
        <dbReference type="ChEBI" id="CHEBI:29108"/>
        <label>2</label>
    </ligand>
</feature>
<feature type="binding site" evidence="6">
    <location>
        <position position="136"/>
    </location>
    <ligand>
        <name>Ca(2+)</name>
        <dbReference type="ChEBI" id="CHEBI:29108"/>
        <label>2</label>
    </ligand>
</feature>
<feature type="binding site" evidence="6">
    <location>
        <position position="137"/>
    </location>
    <ligand>
        <name>Ca(2+)</name>
        <dbReference type="ChEBI" id="CHEBI:29108"/>
        <label>2</label>
    </ligand>
</feature>
<feature type="binding site" evidence="6">
    <location>
        <position position="138"/>
    </location>
    <ligand>
        <name>Ca(2+)</name>
        <dbReference type="ChEBI" id="CHEBI:29108"/>
        <label>3</label>
    </ligand>
</feature>
<feature type="binding site" evidence="6">
    <location>
        <position position="139"/>
    </location>
    <ligand>
        <name>Ca(2+)</name>
        <dbReference type="ChEBI" id="CHEBI:29108"/>
        <label>1</label>
    </ligand>
</feature>
<feature type="binding site" evidence="6">
    <location>
        <position position="139"/>
    </location>
    <ligand>
        <name>Ca(2+)</name>
        <dbReference type="ChEBI" id="CHEBI:29108"/>
        <label>2</label>
    </ligand>
</feature>
<feature type="binding site" evidence="6">
    <location>
        <position position="140"/>
    </location>
    <ligand>
        <name>Ca(2+)</name>
        <dbReference type="ChEBI" id="CHEBI:29108"/>
        <label>3</label>
    </ligand>
</feature>
<feature type="binding site" evidence="6">
    <location>
        <position position="170"/>
    </location>
    <ligand>
        <name>Ca(2+)</name>
        <dbReference type="ChEBI" id="CHEBI:29108"/>
        <label>3</label>
    </ligand>
</feature>
<feature type="binding site" evidence="6">
    <location>
        <position position="172"/>
    </location>
    <ligand>
        <name>Ca(2+)</name>
        <dbReference type="ChEBI" id="CHEBI:29108"/>
        <label>2</label>
    </ligand>
</feature>
<feature type="binding site" evidence="6">
    <location>
        <position position="172"/>
    </location>
    <ligand>
        <name>Ca(2+)</name>
        <dbReference type="ChEBI" id="CHEBI:29108"/>
        <label>3</label>
    </ligand>
</feature>
<feature type="binding site" evidence="6">
    <location>
        <position position="179"/>
    </location>
    <ligand>
        <name>Ca(2+)</name>
        <dbReference type="ChEBI" id="CHEBI:29108"/>
        <label>3</label>
    </ligand>
</feature>
<feature type="binding site" evidence="6">
    <location>
        <position position="224"/>
    </location>
    <ligand>
        <name>Ca(2+)</name>
        <dbReference type="ChEBI" id="CHEBI:29108"/>
        <label>3</label>
    </ligand>
</feature>
<feature type="glycosylation site" description="N-linked (GlcNAc...) asparagine" evidence="4">
    <location>
        <position position="27"/>
    </location>
</feature>
<feature type="glycosylation site" description="N-linked (GlcNAc...) asparagine" evidence="4">
    <location>
        <position position="31"/>
    </location>
</feature>
<feature type="glycosylation site" description="N-linked (GlcNAc...) asparagine" evidence="4">
    <location>
        <position position="32"/>
    </location>
</feature>
<feature type="glycosylation site" description="N-linked (GlcNAc...) asparagine" evidence="4">
    <location>
        <position position="121"/>
    </location>
</feature>
<feature type="glycosylation site" description="N-linked (GlcNAc...) asparagine" evidence="4">
    <location>
        <position position="150"/>
    </location>
</feature>
<feature type="glycosylation site" description="N-linked (GlcNAc...) asparagine" evidence="4">
    <location>
        <position position="263"/>
    </location>
</feature>
<feature type="glycosylation site" description="N-linked (GlcNAc...) asparagine" evidence="4">
    <location>
        <position position="437"/>
    </location>
</feature>
<feature type="glycosylation site" description="N-linked (GlcNAc...) asparagine" evidence="4">
    <location>
        <position position="519"/>
    </location>
</feature>
<feature type="glycosylation site" description="N-linked (GlcNAc...) asparagine" evidence="4">
    <location>
        <position position="531"/>
    </location>
</feature>
<feature type="sequence conflict" description="In Ref. 1; AAN33002." evidence="8" ref="1">
    <original>S</original>
    <variation>F</variation>
    <location>
        <position position="202"/>
    </location>
</feature>
<feature type="strand" evidence="11">
    <location>
        <begin position="45"/>
        <end position="50"/>
    </location>
</feature>
<feature type="strand" evidence="11">
    <location>
        <begin position="55"/>
        <end position="57"/>
    </location>
</feature>
<feature type="strand" evidence="11">
    <location>
        <begin position="59"/>
        <end position="63"/>
    </location>
</feature>
<feature type="strand" evidence="11">
    <location>
        <begin position="73"/>
        <end position="79"/>
    </location>
</feature>
<feature type="turn" evidence="11">
    <location>
        <begin position="83"/>
        <end position="85"/>
    </location>
</feature>
<feature type="strand" evidence="11">
    <location>
        <begin position="86"/>
        <end position="89"/>
    </location>
</feature>
<feature type="turn" evidence="11">
    <location>
        <begin position="90"/>
        <end position="93"/>
    </location>
</feature>
<feature type="strand" evidence="11">
    <location>
        <begin position="94"/>
        <end position="99"/>
    </location>
</feature>
<feature type="turn" evidence="11">
    <location>
        <begin position="103"/>
        <end position="105"/>
    </location>
</feature>
<feature type="strand" evidence="11">
    <location>
        <begin position="108"/>
        <end position="117"/>
    </location>
</feature>
<feature type="turn" evidence="11">
    <location>
        <begin position="118"/>
        <end position="121"/>
    </location>
</feature>
<feature type="strand" evidence="11">
    <location>
        <begin position="128"/>
        <end position="135"/>
    </location>
</feature>
<feature type="strand" evidence="11">
    <location>
        <begin position="143"/>
        <end position="145"/>
    </location>
</feature>
<feature type="strand" evidence="11">
    <location>
        <begin position="147"/>
        <end position="154"/>
    </location>
</feature>
<feature type="strand" evidence="11">
    <location>
        <begin position="162"/>
        <end position="165"/>
    </location>
</feature>
<feature type="strand" evidence="11">
    <location>
        <begin position="176"/>
        <end position="178"/>
    </location>
</feature>
<feature type="strand" evidence="11">
    <location>
        <begin position="182"/>
        <end position="189"/>
    </location>
</feature>
<feature type="turn" evidence="11">
    <location>
        <begin position="190"/>
        <end position="192"/>
    </location>
</feature>
<feature type="strand" evidence="11">
    <location>
        <begin position="193"/>
        <end position="195"/>
    </location>
</feature>
<feature type="strand" evidence="11">
    <location>
        <begin position="199"/>
        <end position="204"/>
    </location>
</feature>
<feature type="turn" evidence="11">
    <location>
        <begin position="210"/>
        <end position="212"/>
    </location>
</feature>
<feature type="strand" evidence="11">
    <location>
        <begin position="214"/>
        <end position="224"/>
    </location>
</feature>
<feature type="strand" evidence="11">
    <location>
        <begin position="231"/>
        <end position="242"/>
    </location>
</feature>
<name>CADH5_CHICK</name>
<proteinExistence type="evidence at protein level"/>
<accession>Q8AYD0</accession>
<accession>F1P1Y9</accession>
<sequence>MKKLILLFSLFLAPAFSYKENQKINQNFSSNNTSHKRLKRDWIWNRMHIREEIDSPLPHHVGKLTSSVGNKNAMYIIEGESANTIFKVQGYDGDIYAFERLDREKKAEYELTAHIIDRRNNRSLEPPSKFIIKVSDINDNAPIFVQKIFNGSVPEMSRLGTSVTKVTAEDADDPTVAGHATVTYQIIKGNEYFTVDDSGVISTARADLDRESQSAYEIIVKAKDALGLTGESSTATVIIRLTDINDNFPVFKHPSFHFRVPENISVGGEVGRVKVEDIDEPQHRNTKYSFVRGDYRDTFEIIANPFTNEGIIRPKKPLDFEKVAEYRFDIEATDHNVNPAYYKPGGSRSISTITIEVTDVDEPPVFTKLSYEFKVRENDPEIKTLGSVWAHDPDAAKRKIRFARRRASPNGDYVRVSDSGIIQLPKPLDREFSSLYNITVAAQEILEDGRLSDRESHAQVHVIVTDENDNAPELVYPEEPRVCENAAPGKVIIRISATDKDEISPGGFFTYSLTTEDSNFSLTENPDNTANITVKDGQFNRELAKIHYLPVIISDNGNPELSSTNTLVISVCKCNEKGDFTFCEERAKQVGVSVQALVAIFICIFTIIAVIALLILLRKRHKKDLSGLRRNVAEIHEQLVTYDEEGGGEMDTTSYDVSVLNSVRKNGIKPEVVPSAYAQVQKPPGNTTSGAGEMEMMIEVKKDEADNDRDLLPYDTLHIYGYEGAESIAESLSSLESGSSDSDIDYDFLNDWGPRFKMLAELYGSEPNEDFVY</sequence>
<protein>
    <recommendedName>
        <fullName evidence="1">Cadherin-5</fullName>
    </recommendedName>
    <alternativeName>
        <fullName evidence="7">Vascular endothelial cadherin</fullName>
        <shortName evidence="7">VE-cadherin</shortName>
    </alternativeName>
</protein>
<reference evidence="9" key="1">
    <citation type="submission" date="2002-06" db="EMBL/GenBank/DDBJ databases">
        <authorList>
            <person name="Romero S."/>
            <person name="Jaffredo T."/>
            <person name="Dunon D."/>
        </authorList>
    </citation>
    <scope>NUCLEOTIDE SEQUENCE [MRNA]</scope>
</reference>
<reference key="2">
    <citation type="journal article" date="2004" name="Nature">
        <title>Sequence and comparative analysis of the chicken genome provide unique perspectives on vertebrate evolution.</title>
        <authorList>
            <person name="Hillier L.W."/>
            <person name="Miller W."/>
            <person name="Birney E."/>
            <person name="Warren W."/>
            <person name="Hardison R.C."/>
            <person name="Ponting C.P."/>
            <person name="Bork P."/>
            <person name="Burt D.W."/>
            <person name="Groenen M.A.M."/>
            <person name="Delany M.E."/>
            <person name="Dodgson J.B."/>
            <person name="Chinwalla A.T."/>
            <person name="Cliften P.F."/>
            <person name="Clifton S.W."/>
            <person name="Delehaunty K.D."/>
            <person name="Fronick C."/>
            <person name="Fulton R.S."/>
            <person name="Graves T.A."/>
            <person name="Kremitzki C."/>
            <person name="Layman D."/>
            <person name="Magrini V."/>
            <person name="McPherson J.D."/>
            <person name="Miner T.L."/>
            <person name="Minx P."/>
            <person name="Nash W.E."/>
            <person name="Nhan M.N."/>
            <person name="Nelson J.O."/>
            <person name="Oddy L.G."/>
            <person name="Pohl C.S."/>
            <person name="Randall-Maher J."/>
            <person name="Smith S.M."/>
            <person name="Wallis J.W."/>
            <person name="Yang S.-P."/>
            <person name="Romanov M.N."/>
            <person name="Rondelli C.M."/>
            <person name="Paton B."/>
            <person name="Smith J."/>
            <person name="Morrice D."/>
            <person name="Daniels L."/>
            <person name="Tempest H.G."/>
            <person name="Robertson L."/>
            <person name="Masabanda J.S."/>
            <person name="Griffin D.K."/>
            <person name="Vignal A."/>
            <person name="Fillon V."/>
            <person name="Jacobbson L."/>
            <person name="Kerje S."/>
            <person name="Andersson L."/>
            <person name="Crooijmans R.P."/>
            <person name="Aerts J."/>
            <person name="van der Poel J.J."/>
            <person name="Ellegren H."/>
            <person name="Caldwell R.B."/>
            <person name="Hubbard S.J."/>
            <person name="Grafham D.V."/>
            <person name="Kierzek A.M."/>
            <person name="McLaren S.R."/>
            <person name="Overton I.M."/>
            <person name="Arakawa H."/>
            <person name="Beattie K.J."/>
            <person name="Bezzubov Y."/>
            <person name="Boardman P.E."/>
            <person name="Bonfield J.K."/>
            <person name="Croning M.D.R."/>
            <person name="Davies R.M."/>
            <person name="Francis M.D."/>
            <person name="Humphray S.J."/>
            <person name="Scott C.E."/>
            <person name="Taylor R.G."/>
            <person name="Tickle C."/>
            <person name="Brown W.R.A."/>
            <person name="Rogers J."/>
            <person name="Buerstedde J.-M."/>
            <person name="Wilson S.A."/>
            <person name="Stubbs L."/>
            <person name="Ovcharenko I."/>
            <person name="Gordon L."/>
            <person name="Lucas S."/>
            <person name="Miller M.M."/>
            <person name="Inoko H."/>
            <person name="Shiina T."/>
            <person name="Kaufman J."/>
            <person name="Salomonsen J."/>
            <person name="Skjoedt K."/>
            <person name="Wong G.K.-S."/>
            <person name="Wang J."/>
            <person name="Liu B."/>
            <person name="Wang J."/>
            <person name="Yu J."/>
            <person name="Yang H."/>
            <person name="Nefedov M."/>
            <person name="Koriabine M."/>
            <person name="Dejong P.J."/>
            <person name="Goodstadt L."/>
            <person name="Webber C."/>
            <person name="Dickens N.J."/>
            <person name="Letunic I."/>
            <person name="Suyama M."/>
            <person name="Torrents D."/>
            <person name="von Mering C."/>
            <person name="Zdobnov E.M."/>
            <person name="Makova K."/>
            <person name="Nekrutenko A."/>
            <person name="Elnitski L."/>
            <person name="Eswara P."/>
            <person name="King D.C."/>
            <person name="Yang S.-P."/>
            <person name="Tyekucheva S."/>
            <person name="Radakrishnan A."/>
            <person name="Harris R.S."/>
            <person name="Chiaromonte F."/>
            <person name="Taylor J."/>
            <person name="He J."/>
            <person name="Rijnkels M."/>
            <person name="Griffiths-Jones S."/>
            <person name="Ureta-Vidal A."/>
            <person name="Hoffman M.M."/>
            <person name="Severin J."/>
            <person name="Searle S.M.J."/>
            <person name="Law A.S."/>
            <person name="Speed D."/>
            <person name="Waddington D."/>
            <person name="Cheng Z."/>
            <person name="Tuzun E."/>
            <person name="Eichler E."/>
            <person name="Bao Z."/>
            <person name="Flicek P."/>
            <person name="Shteynberg D.D."/>
            <person name="Brent M.R."/>
            <person name="Bye J.M."/>
            <person name="Huckle E.J."/>
            <person name="Chatterji S."/>
            <person name="Dewey C."/>
            <person name="Pachter L."/>
            <person name="Kouranov A."/>
            <person name="Mourelatos Z."/>
            <person name="Hatzigeorgiou A.G."/>
            <person name="Paterson A.H."/>
            <person name="Ivarie R."/>
            <person name="Brandstrom M."/>
            <person name="Axelsson E."/>
            <person name="Backstrom N."/>
            <person name="Berlin S."/>
            <person name="Webster M.T."/>
            <person name="Pourquie O."/>
            <person name="Reymond A."/>
            <person name="Ucla C."/>
            <person name="Antonarakis S.E."/>
            <person name="Long M."/>
            <person name="Emerson J.J."/>
            <person name="Betran E."/>
            <person name="Dupanloup I."/>
            <person name="Kaessmann H."/>
            <person name="Hinrichs A.S."/>
            <person name="Bejerano G."/>
            <person name="Furey T.S."/>
            <person name="Harte R.A."/>
            <person name="Raney B."/>
            <person name="Siepel A."/>
            <person name="Kent W.J."/>
            <person name="Haussler D."/>
            <person name="Eyras E."/>
            <person name="Castelo R."/>
            <person name="Abril J.F."/>
            <person name="Castellano S."/>
            <person name="Camara F."/>
            <person name="Parra G."/>
            <person name="Guigo R."/>
            <person name="Bourque G."/>
            <person name="Tesler G."/>
            <person name="Pevzner P.A."/>
            <person name="Smit A."/>
            <person name="Fulton L.A."/>
            <person name="Mardis E.R."/>
            <person name="Wilson R.K."/>
        </authorList>
    </citation>
    <scope>NUCLEOTIDE SEQUENCE [LARGE SCALE GENOMIC DNA]</scope>
    <source>
        <strain>Red jungle fowl</strain>
    </source>
</reference>
<reference evidence="8 10" key="3">
    <citation type="journal article" date="2011" name="J. Mol. Biol.">
        <title>Structure and binding mechanism of vascular endothelial cadherin: a divergent classical cadherin.</title>
        <authorList>
            <person name="Brasch J."/>
            <person name="Harrison O.J."/>
            <person name="Ahlsen G."/>
            <person name="Carnally S.M."/>
            <person name="Henderson R.M."/>
            <person name="Honig B."/>
            <person name="Shapiro L."/>
        </authorList>
    </citation>
    <scope>X-RAY CRYSTALLOGRAPHY (2.10 ANGSTROMS) OF 41-243 IN COMPLEX WITH CALCIUM</scope>
    <scope>FUNCTION</scope>
    <scope>DOMAIN</scope>
    <scope>GLYCOSYLATION</scope>
</reference>
<organism>
    <name type="scientific">Gallus gallus</name>
    <name type="common">Chicken</name>
    <dbReference type="NCBI Taxonomy" id="9031"/>
    <lineage>
        <taxon>Eukaryota</taxon>
        <taxon>Metazoa</taxon>
        <taxon>Chordata</taxon>
        <taxon>Craniata</taxon>
        <taxon>Vertebrata</taxon>
        <taxon>Euteleostomi</taxon>
        <taxon>Archelosauria</taxon>
        <taxon>Archosauria</taxon>
        <taxon>Dinosauria</taxon>
        <taxon>Saurischia</taxon>
        <taxon>Theropoda</taxon>
        <taxon>Coelurosauria</taxon>
        <taxon>Aves</taxon>
        <taxon>Neognathae</taxon>
        <taxon>Galloanserae</taxon>
        <taxon>Galliformes</taxon>
        <taxon>Phasianidae</taxon>
        <taxon>Phasianinae</taxon>
        <taxon>Gallus</taxon>
    </lineage>
</organism>
<dbReference type="EMBL" id="AF522067">
    <property type="protein sequence ID" value="AAN33002.1"/>
    <property type="molecule type" value="mRNA"/>
</dbReference>
<dbReference type="EMBL" id="AADN03006318">
    <property type="status" value="NOT_ANNOTATED_CDS"/>
    <property type="molecule type" value="Genomic_DNA"/>
</dbReference>
<dbReference type="RefSeq" id="NP_989558.1">
    <property type="nucleotide sequence ID" value="NM_204227.1"/>
</dbReference>
<dbReference type="PDB" id="3PPE">
    <property type="method" value="X-ray"/>
    <property type="resolution" value="2.10 A"/>
    <property type="chains" value="A/B=41-243"/>
</dbReference>
<dbReference type="PDBsum" id="3PPE"/>
<dbReference type="SMR" id="Q8AYD0"/>
<dbReference type="FunCoup" id="Q8AYD0">
    <property type="interactions" value="145"/>
</dbReference>
<dbReference type="STRING" id="9031.ENSGALP00000043893"/>
<dbReference type="GlyCosmos" id="Q8AYD0">
    <property type="glycosylation" value="9 sites, No reported glycans"/>
</dbReference>
<dbReference type="GlyGen" id="Q8AYD0">
    <property type="glycosylation" value="9 sites"/>
</dbReference>
<dbReference type="PaxDb" id="9031-ENSGALP00000008445"/>
<dbReference type="GeneID" id="374068"/>
<dbReference type="KEGG" id="gga:374068"/>
<dbReference type="CTD" id="1003"/>
<dbReference type="VEuPathDB" id="HostDB:geneid_374068"/>
<dbReference type="eggNOG" id="KOG3594">
    <property type="taxonomic scope" value="Eukaryota"/>
</dbReference>
<dbReference type="HOGENOM" id="CLU_005284_3_2_1"/>
<dbReference type="InParanoid" id="Q8AYD0"/>
<dbReference type="OrthoDB" id="6252479at2759"/>
<dbReference type="PhylomeDB" id="Q8AYD0"/>
<dbReference type="TreeFam" id="TF329887"/>
<dbReference type="Reactome" id="R-GGA-418990">
    <property type="pathway name" value="Adherens junctions interactions"/>
</dbReference>
<dbReference type="Reactome" id="R-GGA-5218920">
    <property type="pathway name" value="VEGFR2 mediated vascular permeability"/>
</dbReference>
<dbReference type="EvolutionaryTrace" id="Q8AYD0"/>
<dbReference type="PRO" id="PR:Q8AYD0"/>
<dbReference type="Proteomes" id="UP000000539">
    <property type="component" value="Chromosome 11"/>
</dbReference>
<dbReference type="Bgee" id="ENSGALG00000032349">
    <property type="expression patterns" value="Expressed in lung and 12 other cell types or tissues"/>
</dbReference>
<dbReference type="GO" id="GO:0005912">
    <property type="term" value="C:adherens junction"/>
    <property type="evidence" value="ECO:0000250"/>
    <property type="project" value="UniProtKB"/>
</dbReference>
<dbReference type="GO" id="GO:0005923">
    <property type="term" value="C:bicellular tight junction"/>
    <property type="evidence" value="ECO:0000318"/>
    <property type="project" value="GO_Central"/>
</dbReference>
<dbReference type="GO" id="GO:0016342">
    <property type="term" value="C:catenin complex"/>
    <property type="evidence" value="ECO:0000318"/>
    <property type="project" value="GO_Central"/>
</dbReference>
<dbReference type="GO" id="GO:0005737">
    <property type="term" value="C:cytoplasm"/>
    <property type="evidence" value="ECO:0000250"/>
    <property type="project" value="UniProtKB"/>
</dbReference>
<dbReference type="GO" id="GO:0008013">
    <property type="term" value="F:beta-catenin binding"/>
    <property type="evidence" value="ECO:0000318"/>
    <property type="project" value="GO_Central"/>
</dbReference>
<dbReference type="GO" id="GO:0045296">
    <property type="term" value="F:cadherin binding"/>
    <property type="evidence" value="ECO:0000318"/>
    <property type="project" value="GO_Central"/>
</dbReference>
<dbReference type="GO" id="GO:0005509">
    <property type="term" value="F:calcium ion binding"/>
    <property type="evidence" value="ECO:0007669"/>
    <property type="project" value="InterPro"/>
</dbReference>
<dbReference type="GO" id="GO:0019903">
    <property type="term" value="F:protein phosphatase binding"/>
    <property type="evidence" value="ECO:0000318"/>
    <property type="project" value="GO_Central"/>
</dbReference>
<dbReference type="GO" id="GO:0034332">
    <property type="term" value="P:adherens junction organization"/>
    <property type="evidence" value="ECO:0000318"/>
    <property type="project" value="GO_Central"/>
</dbReference>
<dbReference type="GO" id="GO:0016339">
    <property type="term" value="P:calcium-dependent cell-cell adhesion via plasma membrane cell adhesion molecules"/>
    <property type="evidence" value="ECO:0000318"/>
    <property type="project" value="GO_Central"/>
</dbReference>
<dbReference type="GO" id="GO:0060317">
    <property type="term" value="P:cardiac epithelial to mesenchymal transition"/>
    <property type="evidence" value="ECO:0000315"/>
    <property type="project" value="AgBase"/>
</dbReference>
<dbReference type="GO" id="GO:0016477">
    <property type="term" value="P:cell migration"/>
    <property type="evidence" value="ECO:0000318"/>
    <property type="project" value="GO_Central"/>
</dbReference>
<dbReference type="GO" id="GO:0000902">
    <property type="term" value="P:cell morphogenesis"/>
    <property type="evidence" value="ECO:0000318"/>
    <property type="project" value="GO_Central"/>
</dbReference>
<dbReference type="GO" id="GO:0044331">
    <property type="term" value="P:cell-cell adhesion mediated by cadherin"/>
    <property type="evidence" value="ECO:0000318"/>
    <property type="project" value="GO_Central"/>
</dbReference>
<dbReference type="GO" id="GO:0007043">
    <property type="term" value="P:cell-cell junction assembly"/>
    <property type="evidence" value="ECO:0000318"/>
    <property type="project" value="GO_Central"/>
</dbReference>
<dbReference type="GO" id="GO:0001886">
    <property type="term" value="P:endothelial cell morphogenesis"/>
    <property type="evidence" value="ECO:0000250"/>
    <property type="project" value="UniProtKB"/>
</dbReference>
<dbReference type="GO" id="GO:0007156">
    <property type="term" value="P:homophilic cell adhesion via plasma membrane adhesion molecules"/>
    <property type="evidence" value="ECO:0007669"/>
    <property type="project" value="InterPro"/>
</dbReference>
<dbReference type="CDD" id="cd11304">
    <property type="entry name" value="Cadherin_repeat"/>
    <property type="match status" value="5"/>
</dbReference>
<dbReference type="FunFam" id="2.60.40.60:FF:000012">
    <property type="entry name" value="Cadherin 24"/>
    <property type="match status" value="1"/>
</dbReference>
<dbReference type="FunFam" id="2.60.40.60:FF:000217">
    <property type="entry name" value="Cadherin 5"/>
    <property type="match status" value="1"/>
</dbReference>
<dbReference type="FunFam" id="4.10.900.10:FF:000008">
    <property type="entry name" value="Cadherin 5"/>
    <property type="match status" value="1"/>
</dbReference>
<dbReference type="FunFam" id="2.60.40.60:FF:000014">
    <property type="entry name" value="Cadherin 8"/>
    <property type="match status" value="1"/>
</dbReference>
<dbReference type="FunFam" id="2.60.40.60:FF:000202">
    <property type="entry name" value="cadherin-8 isoform X4"/>
    <property type="match status" value="1"/>
</dbReference>
<dbReference type="Gene3D" id="2.60.40.60">
    <property type="entry name" value="Cadherins"/>
    <property type="match status" value="5"/>
</dbReference>
<dbReference type="Gene3D" id="4.10.900.10">
    <property type="entry name" value="TCF3-CBD (Catenin binding domain)"/>
    <property type="match status" value="1"/>
</dbReference>
<dbReference type="InterPro" id="IPR039808">
    <property type="entry name" value="Cadherin"/>
</dbReference>
<dbReference type="InterPro" id="IPR002126">
    <property type="entry name" value="Cadherin-like_dom"/>
</dbReference>
<dbReference type="InterPro" id="IPR015919">
    <property type="entry name" value="Cadherin-like_sf"/>
</dbReference>
<dbReference type="InterPro" id="IPR020894">
    <property type="entry name" value="Cadherin_CS"/>
</dbReference>
<dbReference type="InterPro" id="IPR000233">
    <property type="entry name" value="Cadherin_Y-type_LIR"/>
</dbReference>
<dbReference type="InterPro" id="IPR027397">
    <property type="entry name" value="Catenin-bd_sf"/>
</dbReference>
<dbReference type="PANTHER" id="PTHR24027">
    <property type="entry name" value="CADHERIN-23"/>
    <property type="match status" value="1"/>
</dbReference>
<dbReference type="PANTHER" id="PTHR24027:SF89">
    <property type="entry name" value="CADHERIN-5"/>
    <property type="match status" value="1"/>
</dbReference>
<dbReference type="Pfam" id="PF01049">
    <property type="entry name" value="CADH_Y-type_LIR"/>
    <property type="match status" value="1"/>
</dbReference>
<dbReference type="Pfam" id="PF00028">
    <property type="entry name" value="Cadherin"/>
    <property type="match status" value="5"/>
</dbReference>
<dbReference type="PRINTS" id="PR00205">
    <property type="entry name" value="CADHERIN"/>
</dbReference>
<dbReference type="SMART" id="SM00112">
    <property type="entry name" value="CA"/>
    <property type="match status" value="5"/>
</dbReference>
<dbReference type="SUPFAM" id="SSF49313">
    <property type="entry name" value="Cadherin-like"/>
    <property type="match status" value="5"/>
</dbReference>
<dbReference type="PROSITE" id="PS00232">
    <property type="entry name" value="CADHERIN_1"/>
    <property type="match status" value="3"/>
</dbReference>
<dbReference type="PROSITE" id="PS50268">
    <property type="entry name" value="CADHERIN_2"/>
    <property type="match status" value="5"/>
</dbReference>
<gene>
    <name evidence="1" type="primary">CDH5</name>
</gene>